<name>APAH_SALNS</name>
<accession>B4T6L4</accession>
<comment type="function">
    <text evidence="1">Hydrolyzes diadenosine 5',5'''-P1,P4-tetraphosphate to yield ADP.</text>
</comment>
<comment type="catalytic activity">
    <reaction evidence="1">
        <text>P(1),P(4)-bis(5'-adenosyl) tetraphosphate + H2O = 2 ADP + 2 H(+)</text>
        <dbReference type="Rhea" id="RHEA:24252"/>
        <dbReference type="ChEBI" id="CHEBI:15377"/>
        <dbReference type="ChEBI" id="CHEBI:15378"/>
        <dbReference type="ChEBI" id="CHEBI:58141"/>
        <dbReference type="ChEBI" id="CHEBI:456216"/>
        <dbReference type="EC" id="3.6.1.41"/>
    </reaction>
</comment>
<comment type="similarity">
    <text evidence="1">Belongs to the Ap4A hydrolase family.</text>
</comment>
<protein>
    <recommendedName>
        <fullName evidence="1">Bis(5'-nucleosyl)-tetraphosphatase, symmetrical</fullName>
        <ecNumber evidence="1">3.6.1.41</ecNumber>
    </recommendedName>
    <alternativeName>
        <fullName evidence="1">Ap4A hydrolase</fullName>
    </alternativeName>
    <alternativeName>
        <fullName evidence="1">Diadenosine 5',5'''-P1,P4-tetraphosphate pyrophosphohydrolase</fullName>
    </alternativeName>
    <alternativeName>
        <fullName evidence="1">Diadenosine tetraphosphatase</fullName>
    </alternativeName>
</protein>
<reference key="1">
    <citation type="journal article" date="2011" name="J. Bacteriol.">
        <title>Comparative genomics of 28 Salmonella enterica isolates: evidence for CRISPR-mediated adaptive sublineage evolution.</title>
        <authorList>
            <person name="Fricke W.F."/>
            <person name="Mammel M.K."/>
            <person name="McDermott P.F."/>
            <person name="Tartera C."/>
            <person name="White D.G."/>
            <person name="Leclerc J.E."/>
            <person name="Ravel J."/>
            <person name="Cebula T.A."/>
        </authorList>
    </citation>
    <scope>NUCLEOTIDE SEQUENCE [LARGE SCALE GENOMIC DNA]</scope>
    <source>
        <strain>SL254</strain>
    </source>
</reference>
<sequence length="282" mass="31431">MATYLIGDVHGCYDELIALLQQVEFTPDTDTLWLTGDLVARGPGSLDVLRYVKSLGNSVRLVLGNHDLHLLAVFAGISRNKPKDRLTPLLEAPDADELLNWLRRQPLLQVDEEKKLVMAHAGITPQWDLQTAKECARDVEAVLSSDSYPFFLDAMYGDMPNNWSPELSGLARLRFITNAFTRMRYCFPNGQLDMYSKASPENAPAPLKPWFAIPGPVSEAYSIAFGHWASLEGKGTPEGIYALDTGCCWGGELTCLRWEDKQYFVQPSNRQMDMGEGEAVNA</sequence>
<gene>
    <name evidence="1" type="primary">apaH</name>
    <name type="ordered locus">SNSL254_A0093</name>
</gene>
<organism>
    <name type="scientific">Salmonella newport (strain SL254)</name>
    <dbReference type="NCBI Taxonomy" id="423368"/>
    <lineage>
        <taxon>Bacteria</taxon>
        <taxon>Pseudomonadati</taxon>
        <taxon>Pseudomonadota</taxon>
        <taxon>Gammaproteobacteria</taxon>
        <taxon>Enterobacterales</taxon>
        <taxon>Enterobacteriaceae</taxon>
        <taxon>Salmonella</taxon>
    </lineage>
</organism>
<evidence type="ECO:0000255" key="1">
    <source>
        <dbReference type="HAMAP-Rule" id="MF_00199"/>
    </source>
</evidence>
<keyword id="KW-0378">Hydrolase</keyword>
<feature type="chain" id="PRO_1000099335" description="Bis(5'-nucleosyl)-tetraphosphatase, symmetrical">
    <location>
        <begin position="1"/>
        <end position="282"/>
    </location>
</feature>
<dbReference type="EC" id="3.6.1.41" evidence="1"/>
<dbReference type="EMBL" id="CP001113">
    <property type="protein sequence ID" value="ACF61488.1"/>
    <property type="molecule type" value="Genomic_DNA"/>
</dbReference>
<dbReference type="RefSeq" id="WP_000257211.1">
    <property type="nucleotide sequence ID" value="NZ_CCMR01000003.1"/>
</dbReference>
<dbReference type="SMR" id="B4T6L4"/>
<dbReference type="KEGG" id="see:SNSL254_A0093"/>
<dbReference type="HOGENOM" id="CLU_056184_2_0_6"/>
<dbReference type="Proteomes" id="UP000008824">
    <property type="component" value="Chromosome"/>
</dbReference>
<dbReference type="GO" id="GO:0008803">
    <property type="term" value="F:bis(5'-nucleosyl)-tetraphosphatase (symmetrical) activity"/>
    <property type="evidence" value="ECO:0007669"/>
    <property type="project" value="UniProtKB-UniRule"/>
</dbReference>
<dbReference type="CDD" id="cd07422">
    <property type="entry name" value="MPP_ApaH"/>
    <property type="match status" value="1"/>
</dbReference>
<dbReference type="FunFam" id="3.60.21.10:FF:000013">
    <property type="entry name" value="Bis(5'-nucleosyl)-tetraphosphatase, symmetrical"/>
    <property type="match status" value="1"/>
</dbReference>
<dbReference type="Gene3D" id="3.60.21.10">
    <property type="match status" value="1"/>
</dbReference>
<dbReference type="HAMAP" id="MF_00199">
    <property type="entry name" value="ApaH"/>
    <property type="match status" value="1"/>
</dbReference>
<dbReference type="InterPro" id="IPR004617">
    <property type="entry name" value="ApaH"/>
</dbReference>
<dbReference type="InterPro" id="IPR004843">
    <property type="entry name" value="Calcineurin-like_PHP_ApaH"/>
</dbReference>
<dbReference type="InterPro" id="IPR029052">
    <property type="entry name" value="Metallo-depent_PP-like"/>
</dbReference>
<dbReference type="NCBIfam" id="TIGR00668">
    <property type="entry name" value="apaH"/>
    <property type="match status" value="1"/>
</dbReference>
<dbReference type="NCBIfam" id="NF001204">
    <property type="entry name" value="PRK00166.1"/>
    <property type="match status" value="1"/>
</dbReference>
<dbReference type="PANTHER" id="PTHR40942">
    <property type="match status" value="1"/>
</dbReference>
<dbReference type="PANTHER" id="PTHR40942:SF4">
    <property type="entry name" value="CYTOCHROME C5"/>
    <property type="match status" value="1"/>
</dbReference>
<dbReference type="Pfam" id="PF00149">
    <property type="entry name" value="Metallophos"/>
    <property type="match status" value="1"/>
</dbReference>
<dbReference type="PIRSF" id="PIRSF000903">
    <property type="entry name" value="B5n-ttraPtase_sm"/>
    <property type="match status" value="1"/>
</dbReference>
<dbReference type="SUPFAM" id="SSF56300">
    <property type="entry name" value="Metallo-dependent phosphatases"/>
    <property type="match status" value="1"/>
</dbReference>
<proteinExistence type="inferred from homology"/>